<organism>
    <name type="scientific">Salmonella enteritidis PT4 (strain P125109)</name>
    <dbReference type="NCBI Taxonomy" id="550537"/>
    <lineage>
        <taxon>Bacteria</taxon>
        <taxon>Pseudomonadati</taxon>
        <taxon>Pseudomonadota</taxon>
        <taxon>Gammaproteobacteria</taxon>
        <taxon>Enterobacterales</taxon>
        <taxon>Enterobacteriaceae</taxon>
        <taxon>Salmonella</taxon>
    </lineage>
</organism>
<name>DARP_SALEP</name>
<dbReference type="EMBL" id="AM933172">
    <property type="protein sequence ID" value="CAR35745.1"/>
    <property type="molecule type" value="Genomic_DNA"/>
</dbReference>
<dbReference type="SMR" id="B5R0U6"/>
<dbReference type="KEGG" id="set:SEN4186"/>
<dbReference type="HOGENOM" id="CLU_106757_2_0_6"/>
<dbReference type="Proteomes" id="UP000000613">
    <property type="component" value="Chromosome"/>
</dbReference>
<dbReference type="GO" id="GO:0005829">
    <property type="term" value="C:cytosol"/>
    <property type="evidence" value="ECO:0007669"/>
    <property type="project" value="TreeGrafter"/>
</dbReference>
<dbReference type="GO" id="GO:0043022">
    <property type="term" value="F:ribosome binding"/>
    <property type="evidence" value="ECO:0007669"/>
    <property type="project" value="UniProtKB-UniRule"/>
</dbReference>
<dbReference type="GO" id="GO:0019843">
    <property type="term" value="F:rRNA binding"/>
    <property type="evidence" value="ECO:0007669"/>
    <property type="project" value="UniProtKB-UniRule"/>
</dbReference>
<dbReference type="GO" id="GO:1902626">
    <property type="term" value="P:assembly of large subunit precursor of preribosome"/>
    <property type="evidence" value="ECO:0007669"/>
    <property type="project" value="UniProtKB-UniRule"/>
</dbReference>
<dbReference type="CDD" id="cd16331">
    <property type="entry name" value="YjgA-like"/>
    <property type="match status" value="1"/>
</dbReference>
<dbReference type="FunFam" id="1.10.60.30:FF:000001">
    <property type="entry name" value="UPF0307 protein YjgA"/>
    <property type="match status" value="1"/>
</dbReference>
<dbReference type="FunFam" id="1.10.60.30:FF:000002">
    <property type="entry name" value="UPF0307 protein YjgA"/>
    <property type="match status" value="1"/>
</dbReference>
<dbReference type="Gene3D" id="1.10.60.30">
    <property type="entry name" value="PSPTO4464-like domains"/>
    <property type="match status" value="2"/>
</dbReference>
<dbReference type="HAMAP" id="MF_00765">
    <property type="entry name" value="DarP"/>
    <property type="match status" value="1"/>
</dbReference>
<dbReference type="InterPro" id="IPR006839">
    <property type="entry name" value="DarP"/>
</dbReference>
<dbReference type="InterPro" id="IPR023153">
    <property type="entry name" value="DarP_sf"/>
</dbReference>
<dbReference type="NCBIfam" id="NF003593">
    <property type="entry name" value="PRK05255.1-1"/>
    <property type="match status" value="1"/>
</dbReference>
<dbReference type="PANTHER" id="PTHR38101">
    <property type="entry name" value="UPF0307 PROTEIN YJGA"/>
    <property type="match status" value="1"/>
</dbReference>
<dbReference type="PANTHER" id="PTHR38101:SF1">
    <property type="entry name" value="UPF0307 PROTEIN YJGA"/>
    <property type="match status" value="1"/>
</dbReference>
<dbReference type="Pfam" id="PF04751">
    <property type="entry name" value="DarP"/>
    <property type="match status" value="1"/>
</dbReference>
<dbReference type="PIRSF" id="PIRSF016183">
    <property type="entry name" value="UCP016183"/>
    <property type="match status" value="1"/>
</dbReference>
<dbReference type="SUPFAM" id="SSF158710">
    <property type="entry name" value="PSPTO4464-like"/>
    <property type="match status" value="1"/>
</dbReference>
<feature type="chain" id="PRO_1000198394" description="Dual-action ribosomal maturation protein DarP">
    <location>
        <begin position="1"/>
        <end position="183"/>
    </location>
</feature>
<sequence>MTKQPEDWLDDVPGDDIEDEDDEIIWVSKSEIKRDAEELKRLGAELVDLGKNALDKIPLDADLRDAIELAQRIKMEGRRRQLQLIGKMLRQRDVEPIRQALDKLKNRHNQQVVLFHKLEHLRDRLIVEGDDAVAEVLTLWPHADRQQLRSLIRNAKKEKEGNKPPKSARQIFQYLRELAENEG</sequence>
<keyword id="KW-0963">Cytoplasm</keyword>
<keyword id="KW-0690">Ribosome biogenesis</keyword>
<keyword id="KW-0694">RNA-binding</keyword>
<keyword id="KW-0699">rRNA-binding</keyword>
<evidence type="ECO:0000255" key="1">
    <source>
        <dbReference type="HAMAP-Rule" id="MF_00765"/>
    </source>
</evidence>
<gene>
    <name evidence="1" type="primary">darP</name>
    <name type="ordered locus">SEN4186</name>
</gene>
<protein>
    <recommendedName>
        <fullName evidence="1">Dual-action ribosomal maturation protein DarP</fullName>
    </recommendedName>
    <alternativeName>
        <fullName evidence="1">Large ribosomal subunit assembly factor DarP</fullName>
    </alternativeName>
</protein>
<proteinExistence type="inferred from homology"/>
<accession>B5R0U6</accession>
<reference key="1">
    <citation type="journal article" date="2008" name="Genome Res.">
        <title>Comparative genome analysis of Salmonella enteritidis PT4 and Salmonella gallinarum 287/91 provides insights into evolutionary and host adaptation pathways.</title>
        <authorList>
            <person name="Thomson N.R."/>
            <person name="Clayton D.J."/>
            <person name="Windhorst D."/>
            <person name="Vernikos G."/>
            <person name="Davidson S."/>
            <person name="Churcher C."/>
            <person name="Quail M.A."/>
            <person name="Stevens M."/>
            <person name="Jones M.A."/>
            <person name="Watson M."/>
            <person name="Barron A."/>
            <person name="Layton A."/>
            <person name="Pickard D."/>
            <person name="Kingsley R.A."/>
            <person name="Bignell A."/>
            <person name="Clark L."/>
            <person name="Harris B."/>
            <person name="Ormond D."/>
            <person name="Abdellah Z."/>
            <person name="Brooks K."/>
            <person name="Cherevach I."/>
            <person name="Chillingworth T."/>
            <person name="Woodward J."/>
            <person name="Norberczak H."/>
            <person name="Lord A."/>
            <person name="Arrowsmith C."/>
            <person name="Jagels K."/>
            <person name="Moule S."/>
            <person name="Mungall K."/>
            <person name="Saunders M."/>
            <person name="Whitehead S."/>
            <person name="Chabalgoity J.A."/>
            <person name="Maskell D."/>
            <person name="Humphreys T."/>
            <person name="Roberts M."/>
            <person name="Barrow P.A."/>
            <person name="Dougan G."/>
            <person name="Parkhill J."/>
        </authorList>
    </citation>
    <scope>NUCLEOTIDE SEQUENCE [LARGE SCALE GENOMIC DNA]</scope>
    <source>
        <strain>P125109</strain>
    </source>
</reference>
<comment type="function">
    <text evidence="1">Member of a network of 50S ribosomal subunit biogenesis factors which assembles along the 30S-50S interface, preventing incorrect 23S rRNA structures from forming. Promotes peptidyl transferase center (PTC) maturation.</text>
</comment>
<comment type="subcellular location">
    <subcellularLocation>
        <location evidence="1">Cytoplasm</location>
    </subcellularLocation>
    <text evidence="1">Associates with late stage pre-50S ribosomal subunits.</text>
</comment>
<comment type="similarity">
    <text evidence="1">Belongs to the DarP family.</text>
</comment>